<sequence>MKANHIRILLLVTIAIMFISLMGKWEQTFPADNTKQQTSATQNNSHYDNADSSTNTDVTTTDAKSSLAKETNFSKYDNAKSITINTGVFKDVKVSLLDGAIISASLKDYSISLDDKTPMSLLTDKSGSEYIAKSTIVVNKQPISVNFEDQGIKIENGKQILTLTGSADGLQITRTYTFDDTKYNISVSQNIKNTTSAPVNVIVDDSFARDFDPAGDSFSLLNAHSYTFTGVAYSTAKDSFRKESFKDISKTNGQPTVINSDGQGWVAFLQHYFVSAWIPQSTNAKIYYKNLNGDVFEAGAFTGATIAPNQSENISSILYTGPIIKANLVDLAPNLEKTLDYGMLSFFSEIIFWVMNHIHSLVGNWGLAIILVTCLIKLIFYPLSAKSYRSMAKMRMLQPRIKRLQETYKDDRQALGKKMMELYKEEKVNPLSGCLPMLIQIPIFISLYWVLLESVELRQAPFIFWIHDLSMKDPYFVLPVLMGLSMFLQQKLSPAPADPMQAKVMMFLPVIFTFLFASFPSGLVLYWLTNNLISISQQWIITRHYQATHKK</sequence>
<accession>Q14JK8</accession>
<protein>
    <recommendedName>
        <fullName evidence="1">Membrane protein insertase YidC</fullName>
    </recommendedName>
    <alternativeName>
        <fullName evidence="1">Foldase YidC</fullName>
    </alternativeName>
    <alternativeName>
        <fullName evidence="1">Membrane integrase YidC</fullName>
    </alternativeName>
    <alternativeName>
        <fullName evidence="1">Membrane protein YidC</fullName>
    </alternativeName>
</protein>
<dbReference type="EMBL" id="AM286280">
    <property type="protein sequence ID" value="CAL08249.1"/>
    <property type="molecule type" value="Genomic_DNA"/>
</dbReference>
<dbReference type="RefSeq" id="WP_003021785.1">
    <property type="nucleotide sequence ID" value="NC_008245.1"/>
</dbReference>
<dbReference type="SMR" id="Q14JK8"/>
<dbReference type="KEGG" id="ftf:FTF0233c"/>
<dbReference type="HOGENOM" id="CLU_016535_3_0_6"/>
<dbReference type="GO" id="GO:0005886">
    <property type="term" value="C:plasma membrane"/>
    <property type="evidence" value="ECO:0007669"/>
    <property type="project" value="UniProtKB-SubCell"/>
</dbReference>
<dbReference type="GO" id="GO:0032977">
    <property type="term" value="F:membrane insertase activity"/>
    <property type="evidence" value="ECO:0007669"/>
    <property type="project" value="InterPro"/>
</dbReference>
<dbReference type="GO" id="GO:0051205">
    <property type="term" value="P:protein insertion into membrane"/>
    <property type="evidence" value="ECO:0007669"/>
    <property type="project" value="TreeGrafter"/>
</dbReference>
<dbReference type="GO" id="GO:0015031">
    <property type="term" value="P:protein transport"/>
    <property type="evidence" value="ECO:0007669"/>
    <property type="project" value="UniProtKB-KW"/>
</dbReference>
<dbReference type="CDD" id="cd20070">
    <property type="entry name" value="5TM_YidC_Alb3"/>
    <property type="match status" value="1"/>
</dbReference>
<dbReference type="CDD" id="cd19961">
    <property type="entry name" value="EcYidC-like_peri"/>
    <property type="match status" value="1"/>
</dbReference>
<dbReference type="Gene3D" id="2.70.98.90">
    <property type="match status" value="1"/>
</dbReference>
<dbReference type="HAMAP" id="MF_01810">
    <property type="entry name" value="YidC_type1"/>
    <property type="match status" value="1"/>
</dbReference>
<dbReference type="InterPro" id="IPR019998">
    <property type="entry name" value="Membr_insert_YidC"/>
</dbReference>
<dbReference type="InterPro" id="IPR028053">
    <property type="entry name" value="Membr_insert_YidC_N"/>
</dbReference>
<dbReference type="InterPro" id="IPR001708">
    <property type="entry name" value="YidC/ALB3/OXA1/COX18"/>
</dbReference>
<dbReference type="InterPro" id="IPR028055">
    <property type="entry name" value="YidC/Oxa/ALB_C"/>
</dbReference>
<dbReference type="InterPro" id="IPR047196">
    <property type="entry name" value="YidC_ALB_C"/>
</dbReference>
<dbReference type="InterPro" id="IPR038221">
    <property type="entry name" value="YidC_periplasmic_sf"/>
</dbReference>
<dbReference type="NCBIfam" id="NF002352">
    <property type="entry name" value="PRK01318.1-3"/>
    <property type="match status" value="1"/>
</dbReference>
<dbReference type="NCBIfam" id="TIGR03593">
    <property type="entry name" value="yidC_nterm"/>
    <property type="match status" value="1"/>
</dbReference>
<dbReference type="NCBIfam" id="TIGR03592">
    <property type="entry name" value="yidC_oxa1_cterm"/>
    <property type="match status" value="1"/>
</dbReference>
<dbReference type="PANTHER" id="PTHR12428:SF65">
    <property type="entry name" value="CYTOCHROME C OXIDASE ASSEMBLY PROTEIN COX18, MITOCHONDRIAL"/>
    <property type="match status" value="1"/>
</dbReference>
<dbReference type="PANTHER" id="PTHR12428">
    <property type="entry name" value="OXA1"/>
    <property type="match status" value="1"/>
</dbReference>
<dbReference type="Pfam" id="PF02096">
    <property type="entry name" value="60KD_IMP"/>
    <property type="match status" value="1"/>
</dbReference>
<dbReference type="Pfam" id="PF14849">
    <property type="entry name" value="YidC_periplas"/>
    <property type="match status" value="1"/>
</dbReference>
<dbReference type="PRINTS" id="PR00701">
    <property type="entry name" value="60KDINNERMP"/>
</dbReference>
<dbReference type="PRINTS" id="PR01900">
    <property type="entry name" value="YIDCPROTEIN"/>
</dbReference>
<evidence type="ECO:0000255" key="1">
    <source>
        <dbReference type="HAMAP-Rule" id="MF_01810"/>
    </source>
</evidence>
<evidence type="ECO:0000256" key="2">
    <source>
        <dbReference type="SAM" id="MobiDB-lite"/>
    </source>
</evidence>
<feature type="chain" id="PRO_1000070093" description="Membrane protein insertase YidC">
    <location>
        <begin position="1"/>
        <end position="551"/>
    </location>
</feature>
<feature type="transmembrane region" description="Helical" evidence="1">
    <location>
        <begin position="3"/>
        <end position="23"/>
    </location>
</feature>
<feature type="transmembrane region" description="Helical" evidence="1">
    <location>
        <begin position="361"/>
        <end position="381"/>
    </location>
</feature>
<feature type="transmembrane region" description="Helical" evidence="1">
    <location>
        <begin position="431"/>
        <end position="451"/>
    </location>
</feature>
<feature type="transmembrane region" description="Helical" evidence="1">
    <location>
        <begin position="504"/>
        <end position="524"/>
    </location>
</feature>
<feature type="region of interest" description="Disordered" evidence="2">
    <location>
        <begin position="33"/>
        <end position="59"/>
    </location>
</feature>
<feature type="compositionally biased region" description="Polar residues" evidence="2">
    <location>
        <begin position="33"/>
        <end position="47"/>
    </location>
</feature>
<feature type="compositionally biased region" description="Low complexity" evidence="2">
    <location>
        <begin position="50"/>
        <end position="59"/>
    </location>
</feature>
<reference key="1">
    <citation type="journal article" date="2007" name="PLoS ONE">
        <title>Genome sequencing shows that European isolates of Francisella tularensis subspecies tularensis are almost identical to US laboratory strain Schu S4.</title>
        <authorList>
            <person name="Chaudhuri R.R."/>
            <person name="Ren C.-P."/>
            <person name="Desmond L."/>
            <person name="Vincent G.A."/>
            <person name="Silman N.J."/>
            <person name="Brehm J.K."/>
            <person name="Elmore M.J."/>
            <person name="Hudson M.J."/>
            <person name="Forsman M."/>
            <person name="Isherwood K.E."/>
            <person name="Gurycova D."/>
            <person name="Minton N.P."/>
            <person name="Titball R.W."/>
            <person name="Pallen M.J."/>
            <person name="Vipond R."/>
        </authorList>
    </citation>
    <scope>NUCLEOTIDE SEQUENCE [LARGE SCALE GENOMIC DNA]</scope>
    <source>
        <strain>FSC 198</strain>
    </source>
</reference>
<keyword id="KW-0997">Cell inner membrane</keyword>
<keyword id="KW-1003">Cell membrane</keyword>
<keyword id="KW-0143">Chaperone</keyword>
<keyword id="KW-0472">Membrane</keyword>
<keyword id="KW-0653">Protein transport</keyword>
<keyword id="KW-0812">Transmembrane</keyword>
<keyword id="KW-1133">Transmembrane helix</keyword>
<keyword id="KW-0813">Transport</keyword>
<gene>
    <name evidence="1" type="primary">yidC</name>
    <name type="ordered locus">FTF0233c</name>
</gene>
<proteinExistence type="inferred from homology"/>
<name>YIDC_FRAT1</name>
<organism>
    <name type="scientific">Francisella tularensis subsp. tularensis (strain FSC 198)</name>
    <dbReference type="NCBI Taxonomy" id="393115"/>
    <lineage>
        <taxon>Bacteria</taxon>
        <taxon>Pseudomonadati</taxon>
        <taxon>Pseudomonadota</taxon>
        <taxon>Gammaproteobacteria</taxon>
        <taxon>Thiotrichales</taxon>
        <taxon>Francisellaceae</taxon>
        <taxon>Francisella</taxon>
    </lineage>
</organism>
<comment type="function">
    <text evidence="1">Required for the insertion and/or proper folding and/or complex formation of integral membrane proteins into the membrane. Involved in integration of membrane proteins that insert both dependently and independently of the Sec translocase complex, as well as at least some lipoproteins. Aids folding of multispanning membrane proteins.</text>
</comment>
<comment type="subunit">
    <text evidence="1">Interacts with the Sec translocase complex via SecD. Specifically interacts with transmembrane segments of nascent integral membrane proteins during membrane integration.</text>
</comment>
<comment type="subcellular location">
    <subcellularLocation>
        <location evidence="1">Cell inner membrane</location>
        <topology evidence="1">Multi-pass membrane protein</topology>
    </subcellularLocation>
</comment>
<comment type="similarity">
    <text evidence="1">Belongs to the OXA1/ALB3/YidC family. Type 1 subfamily.</text>
</comment>